<feature type="chain" id="PRO_0000084391" description="Protein LDOC1">
    <location>
        <begin position="1"/>
        <end position="146"/>
    </location>
</feature>
<protein>
    <recommendedName>
        <fullName>Protein LDOC1</fullName>
    </recommendedName>
    <alternativeName>
        <fullName>Leucine zipper protein down-regulated in cancer cells</fullName>
    </alternativeName>
</protein>
<gene>
    <name type="primary">LDOC1</name>
    <name type="synonym">BCUR1</name>
</gene>
<accession>O95751</accession>
<accession>Q6IAR6</accession>
<sequence>MVDELVLLLHALLMRHRALSIENSQLMEQLRLLVCERASLLRQVRPPSCPVPFPETFNGESSRLPEFIVQTASYMLVNENRFCNDAMKVAFLISLLTGEAEEWVVPYIEMDSPILGDYRAFLDEMKQCFGWDDDEDDDDEEEEDDY</sequence>
<organism>
    <name type="scientific">Homo sapiens</name>
    <name type="common">Human</name>
    <dbReference type="NCBI Taxonomy" id="9606"/>
    <lineage>
        <taxon>Eukaryota</taxon>
        <taxon>Metazoa</taxon>
        <taxon>Chordata</taxon>
        <taxon>Craniata</taxon>
        <taxon>Vertebrata</taxon>
        <taxon>Euteleostomi</taxon>
        <taxon>Mammalia</taxon>
        <taxon>Eutheria</taxon>
        <taxon>Euarchontoglires</taxon>
        <taxon>Primates</taxon>
        <taxon>Haplorrhini</taxon>
        <taxon>Catarrhini</taxon>
        <taxon>Hominidae</taxon>
        <taxon>Homo</taxon>
    </lineage>
</organism>
<reference key="1">
    <citation type="journal article" date="1999" name="Cancer Lett.">
        <title>Identification of a novel gene, LDOC1, down-regulated in cancer cell lines.</title>
        <authorList>
            <person name="Nagasaki K."/>
            <person name="Manabe T."/>
            <person name="Hanzawa H."/>
            <person name="Maass N."/>
            <person name="Tsukada T."/>
            <person name="Yamaguchi K."/>
        </authorList>
    </citation>
    <scope>NUCLEOTIDE SEQUENCE [MRNA]</scope>
    <scope>TISSUE SPECIFICITY</scope>
    <scope>SUBCELLULAR LOCATION</scope>
    <source>
        <tissue>Fetal brain</tissue>
    </source>
</reference>
<reference key="2">
    <citation type="submission" date="2004-06" db="EMBL/GenBank/DDBJ databases">
        <title>Cloning of human full open reading frames in Gateway(TM) system entry vector (pDONR201).</title>
        <authorList>
            <person name="Ebert L."/>
            <person name="Schick M."/>
            <person name="Neubert P."/>
            <person name="Schatten R."/>
            <person name="Henze S."/>
            <person name="Korn B."/>
        </authorList>
    </citation>
    <scope>NUCLEOTIDE SEQUENCE [LARGE SCALE MRNA]</scope>
</reference>
<reference key="3">
    <citation type="journal article" date="2005" name="Nature">
        <title>The DNA sequence of the human X chromosome.</title>
        <authorList>
            <person name="Ross M.T."/>
            <person name="Grafham D.V."/>
            <person name="Coffey A.J."/>
            <person name="Scherer S."/>
            <person name="McLay K."/>
            <person name="Muzny D."/>
            <person name="Platzer M."/>
            <person name="Howell G.R."/>
            <person name="Burrows C."/>
            <person name="Bird C.P."/>
            <person name="Frankish A."/>
            <person name="Lovell F.L."/>
            <person name="Howe K.L."/>
            <person name="Ashurst J.L."/>
            <person name="Fulton R.S."/>
            <person name="Sudbrak R."/>
            <person name="Wen G."/>
            <person name="Jones M.C."/>
            <person name="Hurles M.E."/>
            <person name="Andrews T.D."/>
            <person name="Scott C.E."/>
            <person name="Searle S."/>
            <person name="Ramser J."/>
            <person name="Whittaker A."/>
            <person name="Deadman R."/>
            <person name="Carter N.P."/>
            <person name="Hunt S.E."/>
            <person name="Chen R."/>
            <person name="Cree A."/>
            <person name="Gunaratne P."/>
            <person name="Havlak P."/>
            <person name="Hodgson A."/>
            <person name="Metzker M.L."/>
            <person name="Richards S."/>
            <person name="Scott G."/>
            <person name="Steffen D."/>
            <person name="Sodergren E."/>
            <person name="Wheeler D.A."/>
            <person name="Worley K.C."/>
            <person name="Ainscough R."/>
            <person name="Ambrose K.D."/>
            <person name="Ansari-Lari M.A."/>
            <person name="Aradhya S."/>
            <person name="Ashwell R.I."/>
            <person name="Babbage A.K."/>
            <person name="Bagguley C.L."/>
            <person name="Ballabio A."/>
            <person name="Banerjee R."/>
            <person name="Barker G.E."/>
            <person name="Barlow K.F."/>
            <person name="Barrett I.P."/>
            <person name="Bates K.N."/>
            <person name="Beare D.M."/>
            <person name="Beasley H."/>
            <person name="Beasley O."/>
            <person name="Beck A."/>
            <person name="Bethel G."/>
            <person name="Blechschmidt K."/>
            <person name="Brady N."/>
            <person name="Bray-Allen S."/>
            <person name="Bridgeman A.M."/>
            <person name="Brown A.J."/>
            <person name="Brown M.J."/>
            <person name="Bonnin D."/>
            <person name="Bruford E.A."/>
            <person name="Buhay C."/>
            <person name="Burch P."/>
            <person name="Burford D."/>
            <person name="Burgess J."/>
            <person name="Burrill W."/>
            <person name="Burton J."/>
            <person name="Bye J.M."/>
            <person name="Carder C."/>
            <person name="Carrel L."/>
            <person name="Chako J."/>
            <person name="Chapman J.C."/>
            <person name="Chavez D."/>
            <person name="Chen E."/>
            <person name="Chen G."/>
            <person name="Chen Y."/>
            <person name="Chen Z."/>
            <person name="Chinault C."/>
            <person name="Ciccodicola A."/>
            <person name="Clark S.Y."/>
            <person name="Clarke G."/>
            <person name="Clee C.M."/>
            <person name="Clegg S."/>
            <person name="Clerc-Blankenburg K."/>
            <person name="Clifford K."/>
            <person name="Cobley V."/>
            <person name="Cole C.G."/>
            <person name="Conquer J.S."/>
            <person name="Corby N."/>
            <person name="Connor R.E."/>
            <person name="David R."/>
            <person name="Davies J."/>
            <person name="Davis C."/>
            <person name="Davis J."/>
            <person name="Delgado O."/>
            <person name="Deshazo D."/>
            <person name="Dhami P."/>
            <person name="Ding Y."/>
            <person name="Dinh H."/>
            <person name="Dodsworth S."/>
            <person name="Draper H."/>
            <person name="Dugan-Rocha S."/>
            <person name="Dunham A."/>
            <person name="Dunn M."/>
            <person name="Durbin K.J."/>
            <person name="Dutta I."/>
            <person name="Eades T."/>
            <person name="Ellwood M."/>
            <person name="Emery-Cohen A."/>
            <person name="Errington H."/>
            <person name="Evans K.L."/>
            <person name="Faulkner L."/>
            <person name="Francis F."/>
            <person name="Frankland J."/>
            <person name="Fraser A.E."/>
            <person name="Galgoczy P."/>
            <person name="Gilbert J."/>
            <person name="Gill R."/>
            <person name="Gloeckner G."/>
            <person name="Gregory S.G."/>
            <person name="Gribble S."/>
            <person name="Griffiths C."/>
            <person name="Grocock R."/>
            <person name="Gu Y."/>
            <person name="Gwilliam R."/>
            <person name="Hamilton C."/>
            <person name="Hart E.A."/>
            <person name="Hawes A."/>
            <person name="Heath P.D."/>
            <person name="Heitmann K."/>
            <person name="Hennig S."/>
            <person name="Hernandez J."/>
            <person name="Hinzmann B."/>
            <person name="Ho S."/>
            <person name="Hoffs M."/>
            <person name="Howden P.J."/>
            <person name="Huckle E.J."/>
            <person name="Hume J."/>
            <person name="Hunt P.J."/>
            <person name="Hunt A.R."/>
            <person name="Isherwood J."/>
            <person name="Jacob L."/>
            <person name="Johnson D."/>
            <person name="Jones S."/>
            <person name="de Jong P.J."/>
            <person name="Joseph S.S."/>
            <person name="Keenan S."/>
            <person name="Kelly S."/>
            <person name="Kershaw J.K."/>
            <person name="Khan Z."/>
            <person name="Kioschis P."/>
            <person name="Klages S."/>
            <person name="Knights A.J."/>
            <person name="Kosiura A."/>
            <person name="Kovar-Smith C."/>
            <person name="Laird G.K."/>
            <person name="Langford C."/>
            <person name="Lawlor S."/>
            <person name="Leversha M."/>
            <person name="Lewis L."/>
            <person name="Liu W."/>
            <person name="Lloyd C."/>
            <person name="Lloyd D.M."/>
            <person name="Loulseged H."/>
            <person name="Loveland J.E."/>
            <person name="Lovell J.D."/>
            <person name="Lozado R."/>
            <person name="Lu J."/>
            <person name="Lyne R."/>
            <person name="Ma J."/>
            <person name="Maheshwari M."/>
            <person name="Matthews L.H."/>
            <person name="McDowall J."/>
            <person name="McLaren S."/>
            <person name="McMurray A."/>
            <person name="Meidl P."/>
            <person name="Meitinger T."/>
            <person name="Milne S."/>
            <person name="Miner G."/>
            <person name="Mistry S.L."/>
            <person name="Morgan M."/>
            <person name="Morris S."/>
            <person name="Mueller I."/>
            <person name="Mullikin J.C."/>
            <person name="Nguyen N."/>
            <person name="Nordsiek G."/>
            <person name="Nyakatura G."/>
            <person name="O'dell C.N."/>
            <person name="Okwuonu G."/>
            <person name="Palmer S."/>
            <person name="Pandian R."/>
            <person name="Parker D."/>
            <person name="Parrish J."/>
            <person name="Pasternak S."/>
            <person name="Patel D."/>
            <person name="Pearce A.V."/>
            <person name="Pearson D.M."/>
            <person name="Pelan S.E."/>
            <person name="Perez L."/>
            <person name="Porter K.M."/>
            <person name="Ramsey Y."/>
            <person name="Reichwald K."/>
            <person name="Rhodes S."/>
            <person name="Ridler K.A."/>
            <person name="Schlessinger D."/>
            <person name="Schueler M.G."/>
            <person name="Sehra H.K."/>
            <person name="Shaw-Smith C."/>
            <person name="Shen H."/>
            <person name="Sheridan E.M."/>
            <person name="Shownkeen R."/>
            <person name="Skuce C.D."/>
            <person name="Smith M.L."/>
            <person name="Sotheran E.C."/>
            <person name="Steingruber H.E."/>
            <person name="Steward C.A."/>
            <person name="Storey R."/>
            <person name="Swann R.M."/>
            <person name="Swarbreck D."/>
            <person name="Tabor P.E."/>
            <person name="Taudien S."/>
            <person name="Taylor T."/>
            <person name="Teague B."/>
            <person name="Thomas K."/>
            <person name="Thorpe A."/>
            <person name="Timms K."/>
            <person name="Tracey A."/>
            <person name="Trevanion S."/>
            <person name="Tromans A.C."/>
            <person name="d'Urso M."/>
            <person name="Verduzco D."/>
            <person name="Villasana D."/>
            <person name="Waldron L."/>
            <person name="Wall M."/>
            <person name="Wang Q."/>
            <person name="Warren J."/>
            <person name="Warry G.L."/>
            <person name="Wei X."/>
            <person name="West A."/>
            <person name="Whitehead S.L."/>
            <person name="Whiteley M.N."/>
            <person name="Wilkinson J.E."/>
            <person name="Willey D.L."/>
            <person name="Williams G."/>
            <person name="Williams L."/>
            <person name="Williamson A."/>
            <person name="Williamson H."/>
            <person name="Wilming L."/>
            <person name="Woodmansey R.L."/>
            <person name="Wray P.W."/>
            <person name="Yen J."/>
            <person name="Zhang J."/>
            <person name="Zhou J."/>
            <person name="Zoghbi H."/>
            <person name="Zorilla S."/>
            <person name="Buck D."/>
            <person name="Reinhardt R."/>
            <person name="Poustka A."/>
            <person name="Rosenthal A."/>
            <person name="Lehrach H."/>
            <person name="Meindl A."/>
            <person name="Minx P.J."/>
            <person name="Hillier L.W."/>
            <person name="Willard H.F."/>
            <person name="Wilson R.K."/>
            <person name="Waterston R.H."/>
            <person name="Rice C.M."/>
            <person name="Vaudin M."/>
            <person name="Coulson A."/>
            <person name="Nelson D.L."/>
            <person name="Weinstock G."/>
            <person name="Sulston J.E."/>
            <person name="Durbin R.M."/>
            <person name="Hubbard T."/>
            <person name="Gibbs R.A."/>
            <person name="Beck S."/>
            <person name="Rogers J."/>
            <person name="Bentley D.R."/>
        </authorList>
    </citation>
    <scope>NUCLEOTIDE SEQUENCE [LARGE SCALE GENOMIC DNA]</scope>
</reference>
<reference key="4">
    <citation type="journal article" date="2004" name="Genome Res.">
        <title>The status, quality, and expansion of the NIH full-length cDNA project: the Mammalian Gene Collection (MGC).</title>
        <authorList>
            <consortium name="The MGC Project Team"/>
        </authorList>
    </citation>
    <scope>NUCLEOTIDE SEQUENCE [LARGE SCALE MRNA]</scope>
    <source>
        <tissue>Brain</tissue>
    </source>
</reference>
<reference key="5">
    <citation type="journal article" date="2016" name="PLoS ONE">
        <title>Characterization and Genetic Analyses of New Genes Coding for NOD2 Interacting Proteins.</title>
        <authorList>
            <person name="Thiebaut R."/>
            <person name="Esmiol S."/>
            <person name="Lecine P."/>
            <person name="Mahfouz B."/>
            <person name="Hermant A."/>
            <person name="Nicoletti C."/>
            <person name="Parnis S."/>
            <person name="Perroy J."/>
            <person name="Borg J.P."/>
            <person name="Pascoe L."/>
            <person name="Hugot J.P."/>
            <person name="Ollendorff V."/>
        </authorList>
    </citation>
    <scope>INTERACTION WITH NOD2</scope>
    <scope>INDUCTION</scope>
</reference>
<keyword id="KW-0539">Nucleus</keyword>
<keyword id="KW-1267">Proteomics identification</keyword>
<keyword id="KW-1185">Reference proteome</keyword>
<evidence type="ECO:0000269" key="1">
    <source>
    </source>
</evidence>
<evidence type="ECO:0000269" key="2">
    <source>
    </source>
</evidence>
<evidence type="ECO:0000305" key="3"/>
<dbReference type="EMBL" id="AB019527">
    <property type="protein sequence ID" value="BAA34364.1"/>
    <property type="molecule type" value="mRNA"/>
</dbReference>
<dbReference type="EMBL" id="CR457088">
    <property type="protein sequence ID" value="CAG33369.1"/>
    <property type="molecule type" value="mRNA"/>
</dbReference>
<dbReference type="EMBL" id="AL109799">
    <property type="protein sequence ID" value="CAC18891.1"/>
    <property type="molecule type" value="Genomic_DNA"/>
</dbReference>
<dbReference type="EMBL" id="BC003104">
    <property type="protein sequence ID" value="AAH03104.1"/>
    <property type="molecule type" value="mRNA"/>
</dbReference>
<dbReference type="CCDS" id="CCDS14672.1"/>
<dbReference type="RefSeq" id="NP_036449.1">
    <property type="nucleotide sequence ID" value="NM_012317.4"/>
</dbReference>
<dbReference type="SMR" id="O95751"/>
<dbReference type="BioGRID" id="117169">
    <property type="interactions" value="122"/>
</dbReference>
<dbReference type="FunCoup" id="O95751">
    <property type="interactions" value="856"/>
</dbReference>
<dbReference type="IntAct" id="O95751">
    <property type="interactions" value="124"/>
</dbReference>
<dbReference type="MINT" id="O95751"/>
<dbReference type="STRING" id="9606.ENSP00000359557"/>
<dbReference type="BioMuta" id="LDOC1"/>
<dbReference type="jPOST" id="O95751"/>
<dbReference type="MassIVE" id="O95751"/>
<dbReference type="PaxDb" id="9606-ENSP00000359557"/>
<dbReference type="PeptideAtlas" id="O95751"/>
<dbReference type="ProteomicsDB" id="51022"/>
<dbReference type="Pumba" id="O95751"/>
<dbReference type="Antibodypedia" id="16816">
    <property type="antibodies" value="207 antibodies from 27 providers"/>
</dbReference>
<dbReference type="DNASU" id="23641"/>
<dbReference type="Ensembl" id="ENST00000370526.5">
    <property type="protein sequence ID" value="ENSP00000359557.2"/>
    <property type="gene ID" value="ENSG00000182195.9"/>
</dbReference>
<dbReference type="GeneID" id="23641"/>
<dbReference type="KEGG" id="hsa:23641"/>
<dbReference type="MANE-Select" id="ENST00000370526.5">
    <property type="protein sequence ID" value="ENSP00000359557.2"/>
    <property type="RefSeq nucleotide sequence ID" value="NM_012317.4"/>
    <property type="RefSeq protein sequence ID" value="NP_036449.1"/>
</dbReference>
<dbReference type="UCSC" id="uc004fbj.5">
    <property type="organism name" value="human"/>
</dbReference>
<dbReference type="AGR" id="HGNC:6548"/>
<dbReference type="CTD" id="23641"/>
<dbReference type="DisGeNET" id="23641"/>
<dbReference type="GeneCards" id="LDOC1"/>
<dbReference type="HGNC" id="HGNC:6548">
    <property type="gene designation" value="LDOC1"/>
</dbReference>
<dbReference type="HPA" id="ENSG00000182195">
    <property type="expression patterns" value="Tissue enhanced (pituitary)"/>
</dbReference>
<dbReference type="MIM" id="300402">
    <property type="type" value="gene"/>
</dbReference>
<dbReference type="neXtProt" id="NX_O95751"/>
<dbReference type="OpenTargets" id="ENSG00000182195"/>
<dbReference type="PharmGKB" id="PA30329"/>
<dbReference type="VEuPathDB" id="HostDB:ENSG00000182195"/>
<dbReference type="eggNOG" id="ENOG502T19P">
    <property type="taxonomic scope" value="Eukaryota"/>
</dbReference>
<dbReference type="GeneTree" id="ENSGT00940000162721"/>
<dbReference type="HOGENOM" id="CLU_154949_0_0_1"/>
<dbReference type="InParanoid" id="O95751"/>
<dbReference type="OMA" id="CERACLL"/>
<dbReference type="OrthoDB" id="9827795at2759"/>
<dbReference type="PAN-GO" id="O95751">
    <property type="GO annotations" value="1 GO annotation based on evolutionary models"/>
</dbReference>
<dbReference type="PhylomeDB" id="O95751"/>
<dbReference type="TreeFam" id="TF337843"/>
<dbReference type="PathwayCommons" id="O95751"/>
<dbReference type="SignaLink" id="O95751"/>
<dbReference type="BioGRID-ORCS" id="23641">
    <property type="hits" value="10 hits in 773 CRISPR screens"/>
</dbReference>
<dbReference type="ChiTaRS" id="LDOC1">
    <property type="organism name" value="human"/>
</dbReference>
<dbReference type="GeneWiki" id="LDOC1"/>
<dbReference type="GenomeRNAi" id="23641"/>
<dbReference type="Pharos" id="O95751">
    <property type="development level" value="Tbio"/>
</dbReference>
<dbReference type="PRO" id="PR:O95751"/>
<dbReference type="Proteomes" id="UP000005640">
    <property type="component" value="Chromosome X"/>
</dbReference>
<dbReference type="RNAct" id="O95751">
    <property type="molecule type" value="protein"/>
</dbReference>
<dbReference type="Bgee" id="ENSG00000182195">
    <property type="expression patterns" value="Expressed in descending thoracic aorta and 193 other cell types or tissues"/>
</dbReference>
<dbReference type="GO" id="GO:0005730">
    <property type="term" value="C:nucleolus"/>
    <property type="evidence" value="ECO:0000314"/>
    <property type="project" value="HPA"/>
</dbReference>
<dbReference type="GO" id="GO:0005654">
    <property type="term" value="C:nucleoplasm"/>
    <property type="evidence" value="ECO:0000314"/>
    <property type="project" value="HPA"/>
</dbReference>
<dbReference type="GO" id="GO:0005634">
    <property type="term" value="C:nucleus"/>
    <property type="evidence" value="ECO:0000304"/>
    <property type="project" value="ProtInc"/>
</dbReference>
<dbReference type="GO" id="GO:0071222">
    <property type="term" value="P:cellular response to lipopolysaccharide"/>
    <property type="evidence" value="ECO:0000315"/>
    <property type="project" value="UniProtKB"/>
</dbReference>
<dbReference type="GO" id="GO:0071225">
    <property type="term" value="P:cellular response to muramyl dipeptide"/>
    <property type="evidence" value="ECO:0000315"/>
    <property type="project" value="UniProtKB"/>
</dbReference>
<dbReference type="GO" id="GO:0001893">
    <property type="term" value="P:maternal placenta development"/>
    <property type="evidence" value="ECO:0007669"/>
    <property type="project" value="Ensembl"/>
</dbReference>
<dbReference type="GO" id="GO:0060137">
    <property type="term" value="P:maternal process involved in parturition"/>
    <property type="evidence" value="ECO:0007669"/>
    <property type="project" value="Ensembl"/>
</dbReference>
<dbReference type="GO" id="GO:0008285">
    <property type="term" value="P:negative regulation of cell population proliferation"/>
    <property type="evidence" value="ECO:0000304"/>
    <property type="project" value="ProtInc"/>
</dbReference>
<dbReference type="InterPro" id="IPR032549">
    <property type="entry name" value="DUF4939"/>
</dbReference>
<dbReference type="Pfam" id="PF16297">
    <property type="entry name" value="DUF4939"/>
    <property type="match status" value="1"/>
</dbReference>
<comment type="function">
    <text>May have an important role in the development and/or progression of some cancers.</text>
</comment>
<comment type="subunit">
    <text evidence="2">Interacts with NOD2.</text>
</comment>
<comment type="interaction">
    <interactant intactId="EBI-740738">
        <id>O95751</id>
    </interactant>
    <interactant intactId="EBI-487024">
        <id>O14639</id>
        <label>ABLIM1</label>
    </interactant>
    <organismsDiffer>false</organismsDiffer>
    <experiments>2</experiments>
</comment>
<comment type="interaction">
    <interactant intactId="EBI-740738">
        <id>O95751</id>
    </interactant>
    <interactant intactId="EBI-10255023">
        <id>Q6ZN18-2</id>
        <label>AEBP2</label>
    </interactant>
    <organismsDiffer>false</organismsDiffer>
    <experiments>3</experiments>
</comment>
<comment type="interaction">
    <interactant intactId="EBI-740738">
        <id>O95751</id>
    </interactant>
    <interactant intactId="EBI-8643161">
        <id>Q9NX04</id>
        <label>AIRIM</label>
    </interactant>
    <organismsDiffer>false</organismsDiffer>
    <experiments>3</experiments>
</comment>
<comment type="interaction">
    <interactant intactId="EBI-740738">
        <id>O95751</id>
    </interactant>
    <interactant intactId="EBI-541426">
        <id>Q9BXS5</id>
        <label>AP1M1</label>
    </interactant>
    <organismsDiffer>false</organismsDiffer>
    <experiments>6</experiments>
</comment>
<comment type="interaction">
    <interactant intactId="EBI-740738">
        <id>O95751</id>
    </interactant>
    <interactant intactId="EBI-745213">
        <id>P29972</id>
        <label>AQP1</label>
    </interactant>
    <organismsDiffer>false</organismsDiffer>
    <experiments>3</experiments>
</comment>
<comment type="interaction">
    <interactant intactId="EBI-740738">
        <id>O95751</id>
    </interactant>
    <interactant intactId="EBI-492498">
        <id>P18848</id>
        <label>ATF4</label>
    </interactant>
    <organismsDiffer>false</organismsDiffer>
    <experiments>10</experiments>
</comment>
<comment type="interaction">
    <interactant intactId="EBI-740738">
        <id>O95751</id>
    </interactant>
    <interactant intactId="EBI-711802">
        <id>O75348</id>
        <label>ATP6V1G1</label>
    </interactant>
    <organismsDiffer>false</organismsDiffer>
    <experiments>4</experiments>
</comment>
<comment type="interaction">
    <interactant intactId="EBI-740738">
        <id>O95751</id>
    </interactant>
    <interactant intactId="EBI-9977322">
        <id>A0AVN2</id>
        <label>BARD1</label>
    </interactant>
    <organismsDiffer>false</organismsDiffer>
    <experiments>3</experiments>
</comment>
<comment type="interaction">
    <interactant intactId="EBI-740738">
        <id>O95751</id>
    </interactant>
    <interactant intactId="EBI-473181">
        <id>Q99728</id>
        <label>BARD1</label>
    </interactant>
    <organismsDiffer>false</organismsDiffer>
    <experiments>7</experiments>
</comment>
<comment type="interaction">
    <interactant intactId="EBI-740738">
        <id>O95751</id>
    </interactant>
    <interactant intactId="EBI-745073">
        <id>Q9BXY8</id>
        <label>BEX2</label>
    </interactant>
    <organismsDiffer>false</organismsDiffer>
    <experiments>3</experiments>
</comment>
<comment type="interaction">
    <interactant intactId="EBI-740738">
        <id>O95751</id>
    </interactant>
    <interactant intactId="EBI-358049">
        <id>Q13895</id>
        <label>BYSL</label>
    </interactant>
    <organismsDiffer>false</organismsDiffer>
    <experiments>4</experiments>
</comment>
<comment type="interaction">
    <interactant intactId="EBI-740738">
        <id>O95751</id>
    </interactant>
    <interactant intactId="EBI-374880">
        <id>Q99459</id>
        <label>CDC5L</label>
    </interactant>
    <organismsDiffer>false</organismsDiffer>
    <experiments>3</experiments>
</comment>
<comment type="interaction">
    <interactant intactId="EBI-740738">
        <id>O95751</id>
    </interactant>
    <interactant intactId="EBI-742422">
        <id>Q96M91</id>
        <label>CFAP53</label>
    </interactant>
    <organismsDiffer>false</organismsDiffer>
    <experiments>3</experiments>
</comment>
<comment type="interaction">
    <interactant intactId="EBI-740738">
        <id>O95751</id>
    </interactant>
    <interactant intactId="EBI-748128">
        <id>Q8WYA6</id>
        <label>CTNNBL1</label>
    </interactant>
    <organismsDiffer>false</organismsDiffer>
    <experiments>4</experiments>
</comment>
<comment type="interaction">
    <interactant intactId="EBI-740738">
        <id>O95751</id>
    </interactant>
    <interactant intactId="EBI-359932">
        <id>Q92785</id>
        <label>DPF2</label>
    </interactant>
    <organismsDiffer>false</organismsDiffer>
    <experiments>6</experiments>
</comment>
<comment type="interaction">
    <interactant intactId="EBI-740738">
        <id>O95751</id>
    </interactant>
    <interactant intactId="EBI-710457">
        <id>Q7L190</id>
        <label>DPPA4</label>
    </interactant>
    <organismsDiffer>false</organismsDiffer>
    <experiments>7</experiments>
</comment>
<comment type="interaction">
    <interactant intactId="EBI-740738">
        <id>O95751</id>
    </interactant>
    <interactant intactId="EBI-744099">
        <id>Q9H0I2</id>
        <label>ENKD1</label>
    </interactant>
    <organismsDiffer>false</organismsDiffer>
    <experiments>3</experiments>
</comment>
<comment type="interaction">
    <interactant intactId="EBI-740738">
        <id>O95751</id>
    </interactant>
    <interactant intactId="EBI-1752811">
        <id>Q9BQ89</id>
        <label>FAM110A</label>
    </interactant>
    <organismsDiffer>false</organismsDiffer>
    <experiments>3</experiments>
</comment>
<comment type="interaction">
    <interactant intactId="EBI-740738">
        <id>O95751</id>
    </interactant>
    <interactant intactId="EBI-719941">
        <id>Q3B820</id>
        <label>FAM161A</label>
    </interactant>
    <organismsDiffer>false</organismsDiffer>
    <experiments>3</experiments>
</comment>
<comment type="interaction">
    <interactant intactId="EBI-740738">
        <id>O95751</id>
    </interactant>
    <interactant intactId="EBI-742802">
        <id>Q9Y247</id>
        <label>FAM50B</label>
    </interactant>
    <organismsDiffer>false</organismsDiffer>
    <experiments>6</experiments>
</comment>
<comment type="interaction">
    <interactant intactId="EBI-740738">
        <id>O95751</id>
    </interactant>
    <interactant intactId="EBI-6658203">
        <id>Q86YD7</id>
        <label>FAM90A1</label>
    </interactant>
    <organismsDiffer>false</organismsDiffer>
    <experiments>6</experiments>
</comment>
<comment type="interaction">
    <interactant intactId="EBI-740738">
        <id>O95751</id>
    </interactant>
    <interactant intactId="EBI-11958845">
        <id>O94868-3</id>
        <label>FCHSD2</label>
    </interactant>
    <organismsDiffer>false</organismsDiffer>
    <experiments>3</experiments>
</comment>
<comment type="interaction">
    <interactant intactId="EBI-740738">
        <id>O95751</id>
    </interactant>
    <interactant intactId="EBI-744510">
        <id>P15407</id>
        <label>FOSL1</label>
    </interactant>
    <organismsDiffer>false</organismsDiffer>
    <experiments>3</experiments>
</comment>
<comment type="interaction">
    <interactant intactId="EBI-740738">
        <id>O95751</id>
    </interactant>
    <interactant intactId="EBI-740459">
        <id>P51116</id>
        <label>FXR2</label>
    </interactant>
    <organismsDiffer>false</organismsDiffer>
    <experiments>3</experiments>
</comment>
<comment type="interaction">
    <interactant intactId="EBI-740738">
        <id>O95751</id>
    </interactant>
    <interactant intactId="EBI-372506">
        <id>Q8TAE8</id>
        <label>GADD45GIP1</label>
    </interactant>
    <organismsDiffer>false</organismsDiffer>
    <experiments>3</experiments>
</comment>
<comment type="interaction">
    <interactant intactId="EBI-740738">
        <id>O95751</id>
    </interactant>
    <interactant intactId="EBI-746682">
        <id>Q9NVN8</id>
        <label>GNL3L</label>
    </interactant>
    <organismsDiffer>false</organismsDiffer>
    <experiments>5</experiments>
</comment>
<comment type="interaction">
    <interactant intactId="EBI-740738">
        <id>O95751</id>
    </interactant>
    <interactant intactId="EBI-751540">
        <id>O95872</id>
        <label>GPANK1</label>
    </interactant>
    <organismsDiffer>false</organismsDiffer>
    <experiments>3</experiments>
</comment>
<comment type="interaction">
    <interactant intactId="EBI-740738">
        <id>O95751</id>
    </interactant>
    <interactant intactId="EBI-2514791">
        <id>Q96CS2</id>
        <label>HAUS1</label>
    </interactant>
    <organismsDiffer>false</organismsDiffer>
    <experiments>3</experiments>
</comment>
<comment type="interaction">
    <interactant intactId="EBI-740738">
        <id>O95751</id>
    </interactant>
    <interactant intactId="EBI-308629">
        <id>P56524</id>
        <label>HDAC4</label>
    </interactant>
    <organismsDiffer>false</organismsDiffer>
    <experiments>3</experiments>
</comment>
<comment type="interaction">
    <interactant intactId="EBI-740738">
        <id>O95751</id>
    </interactant>
    <interactant intactId="EBI-11953488">
        <id>P56524-2</id>
        <label>HDAC4</label>
    </interactant>
    <organismsDiffer>false</organismsDiffer>
    <experiments>3</experiments>
</comment>
<comment type="interaction">
    <interactant intactId="EBI-740738">
        <id>O95751</id>
    </interactant>
    <interactant intactId="EBI-740220">
        <id>O14964</id>
        <label>HGS</label>
    </interactant>
    <organismsDiffer>false</organismsDiffer>
    <experiments>10</experiments>
</comment>
<comment type="interaction">
    <interactant intactId="EBI-740738">
        <id>O95751</id>
    </interactant>
    <interactant intactId="EBI-3893317">
        <id>P09067</id>
        <label>HOXB5</label>
    </interactant>
    <organismsDiffer>false</organismsDiffer>
    <experiments>3</experiments>
</comment>
<comment type="interaction">
    <interactant intactId="EBI-740738">
        <id>O95751</id>
    </interactant>
    <interactant intactId="EBI-1752118">
        <id>P31273</id>
        <label>HOXC8</label>
    </interactant>
    <organismsDiffer>false</organismsDiffer>
    <experiments>3</experiments>
</comment>
<comment type="interaction">
    <interactant intactId="EBI-740738">
        <id>O95751</id>
    </interactant>
    <interactant intactId="EBI-466029">
        <id>P42858</id>
        <label>HTT</label>
    </interactant>
    <organismsDiffer>false</organismsDiffer>
    <experiments>5</experiments>
</comment>
<comment type="interaction">
    <interactant intactId="EBI-740738">
        <id>O95751</id>
    </interactant>
    <interactant intactId="EBI-16430606">
        <id>A0A0S2Z3X1</id>
        <label>INPP1</label>
    </interactant>
    <organismsDiffer>false</organismsDiffer>
    <experiments>3</experiments>
</comment>
<comment type="interaction">
    <interactant intactId="EBI-740738">
        <id>O95751</id>
    </interactant>
    <interactant intactId="EBI-11944935">
        <id>Q15051-2</id>
        <label>IQCB1</label>
    </interactant>
    <organismsDiffer>false</organismsDiffer>
    <experiments>3</experiments>
</comment>
<comment type="interaction">
    <interactant intactId="EBI-740738">
        <id>O95751</id>
    </interactant>
    <interactant intactId="EBI-17181882">
        <id>O75564-2</id>
        <label>JRK</label>
    </interactant>
    <organismsDiffer>false</organismsDiffer>
    <experiments>3</experiments>
</comment>
<comment type="interaction">
    <interactant intactId="EBI-740738">
        <id>O95751</id>
    </interactant>
    <interactant intactId="EBI-10253976">
        <id>Q6PJG3</id>
        <label>LATS1</label>
    </interactant>
    <organismsDiffer>false</organismsDiffer>
    <experiments>3</experiments>
</comment>
<comment type="interaction">
    <interactant intactId="EBI-740738">
        <id>O95751</id>
    </interactant>
    <interactant intactId="EBI-726510">
        <id>Q96BZ8</id>
        <label>LENG1</label>
    </interactant>
    <organismsDiffer>false</organismsDiffer>
    <experiments>8</experiments>
</comment>
<comment type="interaction">
    <interactant intactId="EBI-740738">
        <id>O95751</id>
    </interactant>
    <interactant intactId="EBI-11959475">
        <id>P25791-3</id>
        <label>LMO2</label>
    </interactant>
    <organismsDiffer>false</organismsDiffer>
    <experiments>3</experiments>
</comment>
<comment type="interaction">
    <interactant intactId="EBI-740738">
        <id>O95751</id>
    </interactant>
    <interactant intactId="EBI-11978579">
        <id>O95983-2</id>
        <label>MBD3</label>
    </interactant>
    <organismsDiffer>false</organismsDiffer>
    <experiments>3</experiments>
</comment>
<comment type="interaction">
    <interactant intactId="EBI-740738">
        <id>O95751</id>
    </interactant>
    <interactant intactId="EBI-399266">
        <id>Q9HAF1</id>
        <label>MEAF6</label>
    </interactant>
    <organismsDiffer>false</organismsDiffer>
    <experiments>3</experiments>
</comment>
<comment type="interaction">
    <interactant intactId="EBI-740738">
        <id>O95751</id>
    </interactant>
    <interactant intactId="EBI-1048159">
        <id>P55081</id>
        <label>MFAP1</label>
    </interactant>
    <organismsDiffer>false</organismsDiffer>
    <experiments>6</experiments>
</comment>
<comment type="interaction">
    <interactant intactId="EBI-740738">
        <id>O95751</id>
    </interactant>
    <interactant intactId="EBI-11991020">
        <id>A6NI15</id>
        <label>MSGN1</label>
    </interactant>
    <organismsDiffer>false</organismsDiffer>
    <experiments>3</experiments>
</comment>
<comment type="interaction">
    <interactant intactId="EBI-740738">
        <id>O95751</id>
    </interactant>
    <interactant intactId="EBI-7445625">
        <id>Q9HC29</id>
        <label>NOD2</label>
    </interactant>
    <organismsDiffer>false</organismsDiffer>
    <experiments>5</experiments>
</comment>
<comment type="interaction">
    <interactant intactId="EBI-740738">
        <id>O95751</id>
    </interactant>
    <interactant intactId="EBI-746484">
        <id>P48552</id>
        <label>NRIP1</label>
    </interactant>
    <organismsDiffer>false</organismsDiffer>
    <experiments>3</experiments>
</comment>
<comment type="interaction">
    <interactant intactId="EBI-740738">
        <id>O95751</id>
    </interactant>
    <interactant intactId="EBI-398874">
        <id>Q9UBU9</id>
        <label>NXF1</label>
    </interactant>
    <organismsDiffer>false</organismsDiffer>
    <experiments>4</experiments>
</comment>
<comment type="interaction">
    <interactant intactId="EBI-740738">
        <id>O95751</id>
    </interactant>
    <interactant intactId="EBI-2858265">
        <id>Q86TG7</id>
        <label>PEG10</label>
    </interactant>
    <organismsDiffer>false</organismsDiffer>
    <experiments>6</experiments>
</comment>
<comment type="interaction">
    <interactant intactId="EBI-740738">
        <id>O95751</id>
    </interactant>
    <interactant intactId="EBI-6259410">
        <id>Q86TG7-2</id>
        <label>PEG10</label>
    </interactant>
    <organismsDiffer>false</organismsDiffer>
    <experiments>4</experiments>
</comment>
<comment type="interaction">
    <interactant intactId="EBI-740738">
        <id>O95751</id>
    </interactant>
    <interactant intactId="EBI-742388">
        <id>Q9H8W4</id>
        <label>PLEKHF2</label>
    </interactant>
    <organismsDiffer>false</organismsDiffer>
    <experiments>5</experiments>
</comment>
<comment type="interaction">
    <interactant intactId="EBI-740738">
        <id>O95751</id>
    </interactant>
    <interactant intactId="EBI-2557469">
        <id>Q6NYC8</id>
        <label>PPP1R18</label>
    </interactant>
    <organismsDiffer>false</organismsDiffer>
    <experiments>3</experiments>
</comment>
<comment type="interaction">
    <interactant intactId="EBI-740738">
        <id>O95751</id>
    </interactant>
    <interactant intactId="EBI-2798416">
        <id>Q99633</id>
        <label>PRPF18</label>
    </interactant>
    <organismsDiffer>false</organismsDiffer>
    <experiments>3</experiments>
</comment>
<comment type="interaction">
    <interactant intactId="EBI-740738">
        <id>O95751</id>
    </interactant>
    <interactant intactId="EBI-1567797">
        <id>Q8WWY3</id>
        <label>PRPF31</label>
    </interactant>
    <organismsDiffer>false</organismsDiffer>
    <experiments>10</experiments>
</comment>
<comment type="interaction">
    <interactant intactId="EBI-740738">
        <id>O95751</id>
    </interactant>
    <interactant intactId="EBI-359352">
        <id>P25786</id>
        <label>PSMA1</label>
    </interactant>
    <organismsDiffer>false</organismsDiffer>
    <experiments>8</experiments>
</comment>
<comment type="interaction">
    <interactant intactId="EBI-740738">
        <id>O95751</id>
    </interactant>
    <interactant intactId="EBI-945916">
        <id>Q92530</id>
        <label>PSMF1</label>
    </interactant>
    <organismsDiffer>false</organismsDiffer>
    <experiments>3</experiments>
</comment>
<comment type="interaction">
    <interactant intactId="EBI-740738">
        <id>O95751</id>
    </interactant>
    <interactant intactId="EBI-372165">
        <id>O14966</id>
        <label>RAB29</label>
    </interactant>
    <organismsDiffer>false</organismsDiffer>
    <experiments>4</experiments>
</comment>
<comment type="interaction">
    <interactant intactId="EBI-740738">
        <id>O95751</id>
    </interactant>
    <interactant intactId="EBI-10249635">
        <id>Q6FGU7</id>
        <label>RAB7L1</label>
    </interactant>
    <organismsDiffer>false</organismsDiffer>
    <experiments>3</experiments>
</comment>
<comment type="interaction">
    <interactant intactId="EBI-740738">
        <id>O95751</id>
    </interactant>
    <interactant intactId="EBI-749285">
        <id>Q15311</id>
        <label>RALBP1</label>
    </interactant>
    <organismsDiffer>false</organismsDiffer>
    <experiments>3</experiments>
</comment>
<comment type="interaction">
    <interactant intactId="EBI-740738">
        <id>O95751</id>
    </interactant>
    <interactant intactId="EBI-6912267">
        <id>A6NK89</id>
        <label>RASSF10</label>
    </interactant>
    <organismsDiffer>false</organismsDiffer>
    <experiments>3</experiments>
</comment>
<comment type="interaction">
    <interactant intactId="EBI-740738">
        <id>O95751</id>
    </interactant>
    <interactant intactId="EBI-10265323">
        <id>Q8N443</id>
        <label>RIBC1</label>
    </interactant>
    <organismsDiffer>false</organismsDiffer>
    <experiments>3</experiments>
</comment>
<comment type="interaction">
    <interactant intactId="EBI-740738">
        <id>O95751</id>
    </interactant>
    <interactant intactId="EBI-16428950">
        <id>A0A0S2Z4G9</id>
        <label>RNF6</label>
    </interactant>
    <organismsDiffer>false</organismsDiffer>
    <experiments>3</experiments>
</comment>
<comment type="interaction">
    <interactant intactId="EBI-740738">
        <id>O95751</id>
    </interactant>
    <interactant intactId="EBI-366570">
        <id>Q9BUL9</id>
        <label>RPP25</label>
    </interactant>
    <organismsDiffer>false</organismsDiffer>
    <experiments>3</experiments>
</comment>
<comment type="interaction">
    <interactant intactId="EBI-740738">
        <id>O95751</id>
    </interactant>
    <interactant intactId="EBI-748391">
        <id>Q9BWG6</id>
        <label>SCNM1</label>
    </interactant>
    <organismsDiffer>false</organismsDiffer>
    <experiments>3</experiments>
</comment>
<comment type="interaction">
    <interactant intactId="EBI-740738">
        <id>O95751</id>
    </interactant>
    <interactant intactId="EBI-727004">
        <id>O00560</id>
        <label>SDCBP</label>
    </interactant>
    <organismsDiffer>false</organismsDiffer>
    <experiments>6</experiments>
</comment>
<comment type="interaction">
    <interactant intactId="EBI-740738">
        <id>O95751</id>
    </interactant>
    <interactant intactId="EBI-747035">
        <id>Q9H788</id>
        <label>SH2D4A</label>
    </interactant>
    <organismsDiffer>false</organismsDiffer>
    <experiments>8</experiments>
</comment>
<comment type="interaction">
    <interactant intactId="EBI-740738">
        <id>O95751</id>
    </interactant>
    <interactant intactId="EBI-358489">
        <id>Q96GM5</id>
        <label>SMARCD1</label>
    </interactant>
    <organismsDiffer>false</organismsDiffer>
    <experiments>5</experiments>
</comment>
<comment type="interaction">
    <interactant intactId="EBI-740738">
        <id>O95751</id>
    </interactant>
    <interactant intactId="EBI-540496">
        <id>Q9H7L9</id>
        <label>SUDS3</label>
    </interactant>
    <organismsDiffer>false</organismsDiffer>
    <experiments>3</experiments>
</comment>
<comment type="interaction">
    <interactant intactId="EBI-740738">
        <id>O95751</id>
    </interactant>
    <interactant intactId="EBI-10172380">
        <id>Q5VWN6-2</id>
        <label>TASOR2</label>
    </interactant>
    <organismsDiffer>false</organismsDiffer>
    <experiments>3</experiments>
</comment>
<comment type="interaction">
    <interactant intactId="EBI-740738">
        <id>O95751</id>
    </interactant>
    <interactant intactId="EBI-3258000">
        <id>Q9P0N9</id>
        <label>TBC1D7</label>
    </interactant>
    <organismsDiffer>false</organismsDiffer>
    <experiments>6</experiments>
</comment>
<comment type="interaction">
    <interactant intactId="EBI-740738">
        <id>O95751</id>
    </interactant>
    <interactant intactId="EBI-11955057">
        <id>Q8N8B7-2</id>
        <label>TCEANC</label>
    </interactant>
    <organismsDiffer>false</organismsDiffer>
    <experiments>3</experiments>
</comment>
<comment type="interaction">
    <interactant intactId="EBI-740738">
        <id>O95751</id>
    </interactant>
    <interactant intactId="EBI-747736">
        <id>Q15561</id>
        <label>TEAD4</label>
    </interactant>
    <organismsDiffer>false</organismsDiffer>
    <experiments>3</experiments>
</comment>
<comment type="interaction">
    <interactant intactId="EBI-740738">
        <id>O95751</id>
    </interactant>
    <interactant intactId="EBI-741350">
        <id>Q9BT49</id>
        <label>THAP7</label>
    </interactant>
    <organismsDiffer>false</organismsDiffer>
    <experiments>3</experiments>
</comment>
<comment type="interaction">
    <interactant intactId="EBI-740738">
        <id>O95751</id>
    </interactant>
    <interactant intactId="EBI-717810">
        <id>Q08117</id>
        <label>TLE5</label>
    </interactant>
    <organismsDiffer>false</organismsDiffer>
    <experiments>3</experiments>
</comment>
<comment type="interaction">
    <interactant intactId="EBI-740738">
        <id>O95751</id>
    </interactant>
    <interactant intactId="EBI-11741437">
        <id>Q08117-2</id>
        <label>TLE5</label>
    </interactant>
    <organismsDiffer>false</organismsDiffer>
    <experiments>3</experiments>
</comment>
<comment type="interaction">
    <interactant intactId="EBI-740738">
        <id>O95751</id>
    </interactant>
    <interactant intactId="EBI-726527">
        <id>P13805</id>
        <label>TNNT1</label>
    </interactant>
    <organismsDiffer>false</organismsDiffer>
    <experiments>4</experiments>
</comment>
<comment type="interaction">
    <interactant intactId="EBI-740738">
        <id>O95751</id>
    </interactant>
    <interactant intactId="EBI-10241197">
        <id>Q3SY00</id>
        <label>TSGA10IP</label>
    </interactant>
    <organismsDiffer>false</organismsDiffer>
    <experiments>3</experiments>
</comment>
<comment type="interaction">
    <interactant intactId="EBI-740738">
        <id>O95751</id>
    </interactant>
    <interactant intactId="EBI-21353855">
        <id>Q99598</id>
        <label>TSNAX</label>
    </interactant>
    <organismsDiffer>false</organismsDiffer>
    <experiments>3</experiments>
</comment>
<comment type="interaction">
    <interactant intactId="EBI-740738">
        <id>O95751</id>
    </interactant>
    <interactant intactId="EBI-6447954">
        <id>Q5W5X9</id>
        <label>TTC23</label>
    </interactant>
    <organismsDiffer>false</organismsDiffer>
    <experiments>4</experiments>
</comment>
<comment type="interaction">
    <interactant intactId="EBI-740738">
        <id>O95751</id>
    </interactant>
    <interactant intactId="EBI-9090990">
        <id>Q5W5X9-3</id>
        <label>TTC23</label>
    </interactant>
    <organismsDiffer>false</organismsDiffer>
    <experiments>3</experiments>
</comment>
<comment type="interaction">
    <interactant intactId="EBI-740738">
        <id>O95751</id>
    </interactant>
    <interactant intactId="EBI-17208936">
        <id>P0CB47</id>
        <label>UBTFL1</label>
    </interactant>
    <organismsDiffer>false</organismsDiffer>
    <experiments>3</experiments>
</comment>
<comment type="interaction">
    <interactant intactId="EBI-740738">
        <id>O95751</id>
    </interactant>
    <interactant intactId="EBI-473284">
        <id>Q9BVJ6</id>
        <label>UTP14A</label>
    </interactant>
    <organismsDiffer>false</organismsDiffer>
    <experiments>3</experiments>
</comment>
<comment type="interaction">
    <interactant intactId="EBI-740738">
        <id>O95751</id>
    </interactant>
    <interactant intactId="EBI-12032042">
        <id>Q64LD2-2</id>
        <label>WDR25</label>
    </interactant>
    <organismsDiffer>false</organismsDiffer>
    <experiments>3</experiments>
</comment>
<comment type="interaction">
    <interactant intactId="EBI-740738">
        <id>O95751</id>
    </interactant>
    <interactant intactId="EBI-711925">
        <id>Q05516</id>
        <label>ZBTB16</label>
    </interactant>
    <organismsDiffer>false</organismsDiffer>
    <experiments>4</experiments>
</comment>
<comment type="interaction">
    <interactant intactId="EBI-740738">
        <id>O95751</id>
    </interactant>
    <interactant intactId="EBI-744471">
        <id>O43167</id>
        <label>ZBTB24</label>
    </interactant>
    <organismsDiffer>false</organismsDiffer>
    <experiments>7</experiments>
</comment>
<comment type="interaction">
    <interactant intactId="EBI-740738">
        <id>O95751</id>
    </interactant>
    <interactant intactId="EBI-2555749">
        <id>Q6P2D0</id>
        <label>ZFP1</label>
    </interactant>
    <organismsDiffer>false</organismsDiffer>
    <experiments>3</experiments>
</comment>
<comment type="interaction">
    <interactant intactId="EBI-740738">
        <id>O95751</id>
    </interactant>
    <interactant intactId="EBI-3439227">
        <id>Q8N5A5</id>
        <label>ZGPAT</label>
    </interactant>
    <organismsDiffer>false</organismsDiffer>
    <experiments>5</experiments>
</comment>
<comment type="interaction">
    <interactant intactId="EBI-740738">
        <id>O95751</id>
    </interactant>
    <interactant intactId="EBI-10183064">
        <id>Q8N5A5-2</id>
        <label>ZGPAT</label>
    </interactant>
    <organismsDiffer>false</organismsDiffer>
    <experiments>3</experiments>
</comment>
<comment type="interaction">
    <interactant intactId="EBI-740738">
        <id>O95751</id>
    </interactant>
    <interactant intactId="EBI-2555767">
        <id>Q15973</id>
        <label>ZNF124</label>
    </interactant>
    <organismsDiffer>false</organismsDiffer>
    <experiments>3</experiments>
</comment>
<comment type="interaction">
    <interactant intactId="EBI-740738">
        <id>O95751</id>
    </interactant>
    <interactant intactId="EBI-10177272">
        <id>P15622-3</id>
        <label>ZNF250</label>
    </interactant>
    <organismsDiffer>false</organismsDiffer>
    <experiments>3</experiments>
</comment>
<comment type="interaction">
    <interactant intactId="EBI-740738">
        <id>O95751</id>
    </interactant>
    <interactant intactId="EBI-347633">
        <id>Q9H9D4</id>
        <label>ZNF408</label>
    </interactant>
    <organismsDiffer>false</organismsDiffer>
    <experiments>3</experiments>
</comment>
<comment type="interaction">
    <interactant intactId="EBI-740738">
        <id>O95751</id>
    </interactant>
    <interactant intactId="EBI-10273713">
        <id>Q8TBZ8</id>
        <label>ZNF564</label>
    </interactant>
    <organismsDiffer>false</organismsDiffer>
    <experiments>3</experiments>
</comment>
<comment type="interaction">
    <interactant intactId="EBI-740738">
        <id>O95751</id>
    </interactant>
    <interactant intactId="EBI-6427977">
        <id>Q96SQ5</id>
        <label>ZNF587</label>
    </interactant>
    <organismsDiffer>false</organismsDiffer>
    <experiments>3</experiments>
</comment>
<comment type="interaction">
    <interactant intactId="EBI-740738">
        <id>O95751</id>
    </interactant>
    <interactant intactId="EBI-9977294">
        <id>Q9UEG4</id>
        <label>ZNF629</label>
    </interactant>
    <organismsDiffer>false</organismsDiffer>
    <experiments>3</experiments>
</comment>
<comment type="interaction">
    <interactant intactId="EBI-740738">
        <id>O95751</id>
    </interactant>
    <interactant intactId="EBI-11985915">
        <id>Q5T619</id>
        <label>ZNF648</label>
    </interactant>
    <organismsDiffer>false</organismsDiffer>
    <experiments>3</experiments>
</comment>
<comment type="interaction">
    <interactant intactId="EBI-740738">
        <id>O95751</id>
    </interactant>
    <interactant intactId="EBI-16429014">
        <id>A0A0S2Z5X4</id>
        <label>ZNF688</label>
    </interactant>
    <organismsDiffer>false</organismsDiffer>
    <experiments>3</experiments>
</comment>
<comment type="interaction">
    <interactant intactId="EBI-740738">
        <id>O95751</id>
    </interactant>
    <interactant intactId="EBI-10251462">
        <id>Q6NX45</id>
        <label>ZNF774</label>
    </interactant>
    <organismsDiffer>false</organismsDiffer>
    <experiments>5</experiments>
</comment>
<comment type="interaction">
    <interactant intactId="EBI-740738">
        <id>O95751</id>
    </interactant>
    <interactant intactId="EBI-5667516">
        <id>Q9Y2P0</id>
        <label>ZNF835</label>
    </interactant>
    <organismsDiffer>false</organismsDiffer>
    <experiments>3</experiments>
</comment>
<comment type="subcellular location">
    <subcellularLocation>
        <location evidence="1">Nucleus</location>
    </subcellularLocation>
</comment>
<comment type="tissue specificity">
    <text evidence="1">Ubiquitously expressed with high levels in brain ant thyroid and low expression in placenta, liver and leukocytes. Expressed as well in six of the seven human breast cancer cell lines examined.</text>
</comment>
<comment type="induction">
    <text evidence="2">Down-regulated by muramyl-dipeptide and lipopolysaccharide.</text>
</comment>
<comment type="similarity">
    <text evidence="3">Belongs to the LDOC1 family.</text>
</comment>
<name>LDOC1_HUMAN</name>
<proteinExistence type="evidence at protein level"/>